<name>TILS_MYCPA</name>
<accession>Q744A3</accession>
<gene>
    <name evidence="1" type="primary">tilS</name>
    <name type="ordered locus">MAP_0438</name>
</gene>
<feature type="chain" id="PRO_0000181724" description="tRNA(Ile)-lysidine synthase">
    <location>
        <begin position="1"/>
        <end position="320"/>
    </location>
</feature>
<feature type="binding site" evidence="1">
    <location>
        <begin position="33"/>
        <end position="38"/>
    </location>
    <ligand>
        <name>ATP</name>
        <dbReference type="ChEBI" id="CHEBI:30616"/>
    </ligand>
</feature>
<organism>
    <name type="scientific">Mycolicibacterium paratuberculosis (strain ATCC BAA-968 / K-10)</name>
    <name type="common">Mycobacterium paratuberculosis</name>
    <dbReference type="NCBI Taxonomy" id="262316"/>
    <lineage>
        <taxon>Bacteria</taxon>
        <taxon>Bacillati</taxon>
        <taxon>Actinomycetota</taxon>
        <taxon>Actinomycetes</taxon>
        <taxon>Mycobacteriales</taxon>
        <taxon>Mycobacteriaceae</taxon>
        <taxon>Mycobacterium</taxon>
        <taxon>Mycobacterium avium complex (MAC)</taxon>
    </lineage>
</organism>
<protein>
    <recommendedName>
        <fullName evidence="1">tRNA(Ile)-lysidine synthase</fullName>
        <ecNumber evidence="1">6.3.4.19</ecNumber>
    </recommendedName>
    <alternativeName>
        <fullName evidence="1">tRNA(Ile)-2-lysyl-cytidine synthase</fullName>
    </alternativeName>
    <alternativeName>
        <fullName evidence="1">tRNA(Ile)-lysidine synthetase</fullName>
    </alternativeName>
</protein>
<keyword id="KW-0067">ATP-binding</keyword>
<keyword id="KW-0963">Cytoplasm</keyword>
<keyword id="KW-0436">Ligase</keyword>
<keyword id="KW-0547">Nucleotide-binding</keyword>
<keyword id="KW-1185">Reference proteome</keyword>
<keyword id="KW-0819">tRNA processing</keyword>
<proteinExistence type="inferred from homology"/>
<comment type="function">
    <text evidence="1">Ligates lysine onto the cytidine present at position 34 of the AUA codon-specific tRNA(Ile) that contains the anticodon CAU, in an ATP-dependent manner. Cytidine is converted to lysidine, thus changing the amino acid specificity of the tRNA from methionine to isoleucine.</text>
</comment>
<comment type="catalytic activity">
    <reaction evidence="1">
        <text>cytidine(34) in tRNA(Ile2) + L-lysine + ATP = lysidine(34) in tRNA(Ile2) + AMP + diphosphate + H(+)</text>
        <dbReference type="Rhea" id="RHEA:43744"/>
        <dbReference type="Rhea" id="RHEA-COMP:10625"/>
        <dbReference type="Rhea" id="RHEA-COMP:10670"/>
        <dbReference type="ChEBI" id="CHEBI:15378"/>
        <dbReference type="ChEBI" id="CHEBI:30616"/>
        <dbReference type="ChEBI" id="CHEBI:32551"/>
        <dbReference type="ChEBI" id="CHEBI:33019"/>
        <dbReference type="ChEBI" id="CHEBI:82748"/>
        <dbReference type="ChEBI" id="CHEBI:83665"/>
        <dbReference type="ChEBI" id="CHEBI:456215"/>
        <dbReference type="EC" id="6.3.4.19"/>
    </reaction>
</comment>
<comment type="subcellular location">
    <subcellularLocation>
        <location evidence="1">Cytoplasm</location>
    </subcellularLocation>
</comment>
<comment type="domain">
    <text>The N-terminal region contains the highly conserved SGGXDS motif, predicted to be a P-loop motif involved in ATP binding.</text>
</comment>
<comment type="similarity">
    <text evidence="1">Belongs to the tRNA(Ile)-lysidine synthase family.</text>
</comment>
<sequence>MDRPGALDRLRTAVEAFSTAHLGAVERWCVALSGGPDSLALTAVAARLRPTTAVIVDHGLQPDSAAVAQTARAQAIALGCVAAQVISVHVDGEGGLEAAARRARYAALAAHRDGPVLLGHTLDDQAETVLLGLGRGSGVRSIAGMRPHDPPWCRPLLGQRRAVTHAACAELGLTAWQDPHNSDRRFARARLRAEVLPLLEEVLGGGVVEALARTATALREDNELLDALAERALPAARAGAGLQVAALAGLDAPVRRRVIRAWLLAGGATGLTDKQIRGVDNLVTAWRGQGAVAVGSSLPGERLFAGRRDGVLTLWREPVR</sequence>
<reference key="1">
    <citation type="journal article" date="2005" name="Proc. Natl. Acad. Sci. U.S.A.">
        <title>The complete genome sequence of Mycobacterium avium subspecies paratuberculosis.</title>
        <authorList>
            <person name="Li L."/>
            <person name="Bannantine J.P."/>
            <person name="Zhang Q."/>
            <person name="Amonsin A."/>
            <person name="May B.J."/>
            <person name="Alt D."/>
            <person name="Banerji N."/>
            <person name="Kanjilal S."/>
            <person name="Kapur V."/>
        </authorList>
    </citation>
    <scope>NUCLEOTIDE SEQUENCE [LARGE SCALE GENOMIC DNA]</scope>
    <source>
        <strain>ATCC BAA-968 / K-10</strain>
    </source>
</reference>
<evidence type="ECO:0000255" key="1">
    <source>
        <dbReference type="HAMAP-Rule" id="MF_01161"/>
    </source>
</evidence>
<dbReference type="EC" id="6.3.4.19" evidence="1"/>
<dbReference type="EMBL" id="AE016958">
    <property type="protein sequence ID" value="AAS02755.1"/>
    <property type="molecule type" value="Genomic_DNA"/>
</dbReference>
<dbReference type="RefSeq" id="WP_003877090.1">
    <property type="nucleotide sequence ID" value="NC_002944.2"/>
</dbReference>
<dbReference type="SMR" id="Q744A3"/>
<dbReference type="STRING" id="262316.MAP_0438"/>
<dbReference type="KEGG" id="mpa:MAP_0438"/>
<dbReference type="PATRIC" id="fig|262316.17.peg.466"/>
<dbReference type="eggNOG" id="COG0037">
    <property type="taxonomic scope" value="Bacteria"/>
</dbReference>
<dbReference type="HOGENOM" id="CLU_018869_1_1_11"/>
<dbReference type="Proteomes" id="UP000000580">
    <property type="component" value="Chromosome"/>
</dbReference>
<dbReference type="GO" id="GO:0005737">
    <property type="term" value="C:cytoplasm"/>
    <property type="evidence" value="ECO:0007669"/>
    <property type="project" value="UniProtKB-SubCell"/>
</dbReference>
<dbReference type="GO" id="GO:0005524">
    <property type="term" value="F:ATP binding"/>
    <property type="evidence" value="ECO:0007669"/>
    <property type="project" value="UniProtKB-UniRule"/>
</dbReference>
<dbReference type="GO" id="GO:0032267">
    <property type="term" value="F:tRNA(Ile)-lysidine synthase activity"/>
    <property type="evidence" value="ECO:0007669"/>
    <property type="project" value="UniProtKB-EC"/>
</dbReference>
<dbReference type="GO" id="GO:0006400">
    <property type="term" value="P:tRNA modification"/>
    <property type="evidence" value="ECO:0007669"/>
    <property type="project" value="UniProtKB-UniRule"/>
</dbReference>
<dbReference type="CDD" id="cd01992">
    <property type="entry name" value="TilS_N"/>
    <property type="match status" value="1"/>
</dbReference>
<dbReference type="Gene3D" id="1.20.59.20">
    <property type="match status" value="1"/>
</dbReference>
<dbReference type="Gene3D" id="3.40.50.620">
    <property type="entry name" value="HUPs"/>
    <property type="match status" value="1"/>
</dbReference>
<dbReference type="HAMAP" id="MF_01161">
    <property type="entry name" value="tRNA_Ile_lys_synt"/>
    <property type="match status" value="1"/>
</dbReference>
<dbReference type="InterPro" id="IPR014729">
    <property type="entry name" value="Rossmann-like_a/b/a_fold"/>
</dbReference>
<dbReference type="InterPro" id="IPR011063">
    <property type="entry name" value="TilS/TtcA_N"/>
</dbReference>
<dbReference type="InterPro" id="IPR012094">
    <property type="entry name" value="tRNA_Ile_lys_synt"/>
</dbReference>
<dbReference type="InterPro" id="IPR012795">
    <property type="entry name" value="tRNA_Ile_lys_synt_N"/>
</dbReference>
<dbReference type="InterPro" id="IPR015262">
    <property type="entry name" value="tRNA_Ile_lys_synt_subst-bd"/>
</dbReference>
<dbReference type="NCBIfam" id="TIGR02432">
    <property type="entry name" value="lysidine_TilS_N"/>
    <property type="match status" value="1"/>
</dbReference>
<dbReference type="PANTHER" id="PTHR43033">
    <property type="entry name" value="TRNA(ILE)-LYSIDINE SYNTHASE-RELATED"/>
    <property type="match status" value="1"/>
</dbReference>
<dbReference type="PANTHER" id="PTHR43033:SF1">
    <property type="entry name" value="TRNA(ILE)-LYSIDINE SYNTHASE-RELATED"/>
    <property type="match status" value="1"/>
</dbReference>
<dbReference type="Pfam" id="PF01171">
    <property type="entry name" value="ATP_bind_3"/>
    <property type="match status" value="1"/>
</dbReference>
<dbReference type="Pfam" id="PF09179">
    <property type="entry name" value="TilS"/>
    <property type="match status" value="1"/>
</dbReference>
<dbReference type="SUPFAM" id="SSF52402">
    <property type="entry name" value="Adenine nucleotide alpha hydrolases-like"/>
    <property type="match status" value="1"/>
</dbReference>
<dbReference type="SUPFAM" id="SSF82829">
    <property type="entry name" value="MesJ substrate recognition domain-like"/>
    <property type="match status" value="1"/>
</dbReference>